<comment type="function">
    <text evidence="3 5">Transcription factor that, in opposition to HDG1, promotes cell proliferation and morphogenesis via transcriptional activation of meristem and cell proliferation genes, but prevents differentiation, especially during embryogenesis (PubMed:12172019, PubMed:25564655). Binds to the promoter and triggers the expression of epidermally expressed genes such as GSO1, GSO2, ACR4 and WER, and of HD-ZIP homeobox genes including PDF2, HDG1, HDG5, HDG7, HDG8, HDG11, ANL2, PDF2 and ATML1 (PubMed:25564655).</text>
</comment>
<comment type="subunit">
    <text evidence="5">Interacts with HDG1, HDG2, HDG3, HDG10, ANL2, ATML1, PDF2, HDG11 and HDG12.</text>
</comment>
<comment type="subcellular location">
    <subcellularLocation>
        <location evidence="8">Nucleus</location>
    </subcellularLocation>
</comment>
<comment type="tissue specificity">
    <text evidence="3 4">Mostly expressed in developing seeds. Also expressed in roots, seedlings, and siliques, and, at low levels, in leaves.</text>
</comment>
<comment type="developmental stage">
    <text evidence="3 5">Expressed in embryo during embryogenesis, first throughoutthe embryo, but later basally localized at the heart stage (PubMed:12172019, PubMed:25564655). Also present in free nuclear endosperm, but disappears once endosperm cellularization begins (PubMed:12172019). Observed in the stem cell niche and the provascular tissue of mature roots (PubMed:25564655).</text>
</comment>
<comment type="miscellaneous">
    <text evidence="9">Was named 'Baby boom' because overexpressing transgenic plants exhibit several spontaneous somatic embryos.</text>
</comment>
<comment type="similarity">
    <text evidence="8">Belongs to the AP2/ERF transcription factor family. AP2 subfamily.</text>
</comment>
<feature type="chain" id="PRO_0000112525" description="AP2-like ethylene-responsive transcription factor BBM">
    <location>
        <begin position="1"/>
        <end position="584"/>
    </location>
</feature>
<feature type="DNA-binding region" description="AP2/ERF 1" evidence="1">
    <location>
        <begin position="210"/>
        <end position="276"/>
    </location>
</feature>
<feature type="DNA-binding region" description="AP2/ERF 2" evidence="1">
    <location>
        <begin position="312"/>
        <end position="370"/>
    </location>
</feature>
<feature type="region of interest" description="Disordered" evidence="2">
    <location>
        <begin position="150"/>
        <end position="180"/>
    </location>
</feature>
<feature type="compositionally biased region" description="Low complexity" evidence="2">
    <location>
        <begin position="164"/>
        <end position="180"/>
    </location>
</feature>
<feature type="sequence conflict" description="In Ref. 1; AAM33803." evidence="8" ref="1">
    <original>NIN</original>
    <variation>TLT</variation>
    <location>
        <begin position="88"/>
        <end position="90"/>
    </location>
</feature>
<feature type="sequence conflict" description="In Ref. 3; CAC01738." evidence="8" ref="3">
    <location>
        <begin position="244"/>
        <end position="246"/>
    </location>
</feature>
<feature type="sequence conflict" description="In Ref. 1; AAM33803." evidence="8" ref="1">
    <original>T</original>
    <variation>P</variation>
    <location>
        <position position="269"/>
    </location>
</feature>
<feature type="sequence conflict" description="In Ref. 2; AAS97941." evidence="8" ref="2">
    <original>L</original>
    <variation>M</variation>
    <location>
        <position position="277"/>
    </location>
</feature>
<feature type="sequence conflict" description="In Ref. 2; AAS97941." evidence="8" ref="2">
    <location>
        <position position="427"/>
    </location>
</feature>
<name>BBM_ARATH</name>
<accession>Q6PQQ4</accession>
<accession>Q8LSN1</accession>
<accession>Q9LF42</accession>
<protein>
    <recommendedName>
        <fullName evidence="6">AP2-like ethylene-responsive transcription factor BBM</fullName>
        <shortName evidence="6">AtBBM</shortName>
    </recommendedName>
    <alternativeName>
        <fullName evidence="7">Protein AINTEGUMENTA-LIKE 2</fullName>
    </alternativeName>
    <alternativeName>
        <fullName evidence="6">Protein BABY BOOM</fullName>
    </alternativeName>
</protein>
<sequence>MNSMNNWLGFSLSPHDQNHHRTDVDSSTTRTAVDVAGGYCFDLAAPSDESSAVQTSFLSPFGVTLEAFTRDNNSHSRDWDINGGACNNINNNEQNGPKLENFLGRTTTIYNTNETVVDGNGDCGGGDGGGGGSLGLSMIKTWLSNHSVANANHQDNGNGARGLSLSMNSSTSDSNNYNNNDDVVQEKTIVDVVETTPKKTIESFGQRTSIYRGVTRHRWTGRYEAHLWDNSCKREGQTRKGRQVYLGGYDKEEKAARAYDLAALKYWGTTTTTNFPLSEYEKEVEEMKHMTRQEYVASLRRKSSGFSRGASIYRGVTRHHQHGRWQARIGRVAGNKDLYLGTFGTQEEAAEAYDIAAIKFRGLSAVTNFDMNRYNVKAILESPSLPIGSSAKRLKDVNNPVPAMMISNNVSESANNVSGWQNTAFQHHQGMDLSLLQQQQERYVGYYNGGNLSTESTRVCFKQEEEQQHFLRNSPSHMTNVDHHSSTSDDSVTVCGNVVSYGGYQGFAIPVGTSVNYDPFTAAEIAYNARNHYYYAQHQQQQQIQQSPGGDFPVAISNNHSSNMYFHGEGGGEGAPTFSVWNDT</sequence>
<gene>
    <name evidence="6" type="primary">BBM</name>
    <name evidence="7" type="synonym">AIL2</name>
    <name evidence="10" type="ordered locus">At5g17430</name>
    <name evidence="11" type="ORF">T10B6.90</name>
</gene>
<reference key="1">
    <citation type="journal article" date="2002" name="Plant Cell">
        <title>Ectopic expression of BABY BOOM triggers a conversion from vegetative to embryonic growth.</title>
        <authorList>
            <person name="Boutilier K."/>
            <person name="Offringa R."/>
            <person name="Sharma V.K."/>
            <person name="Kieft H."/>
            <person name="Ouellet T."/>
            <person name="Zhang L."/>
            <person name="Hattori J."/>
            <person name="Liu C.-M."/>
            <person name="Van Lammeren A.A.M."/>
            <person name="Miki B.L.A."/>
            <person name="Custers J.B.M."/>
            <person name="Van Lookeren Campagne M.M."/>
        </authorList>
    </citation>
    <scope>NUCLEOTIDE SEQUENCE [GENOMIC DNA]</scope>
    <scope>FUNCTION</scope>
    <scope>TISSUE SPECIFICITY</scope>
    <scope>DEVELOPMENTAL STAGE</scope>
    <source>
        <strain>cv. C24</strain>
    </source>
</reference>
<reference key="2">
    <citation type="submission" date="2004-03" db="EMBL/GenBank/DDBJ databases">
        <title>Molecular cloning, expression, phylogenetic and functional characterization of the Arabidopsis AP2/EREBP transcription factor family.</title>
        <authorList>
            <person name="Pan Y."/>
            <person name="Gong W."/>
            <person name="Liu D."/>
            <person name="Fu Q."/>
            <person name="Mei W.-Q."/>
            <person name="Song W.-Q."/>
            <person name="Ma L.-G."/>
            <person name="Luo J.-C."/>
            <person name="Deng X.-W."/>
            <person name="Zhu Y.-X."/>
        </authorList>
    </citation>
    <scope>NUCLEOTIDE SEQUENCE [MRNA]</scope>
</reference>
<reference key="3">
    <citation type="journal article" date="2000" name="Nature">
        <title>Sequence and analysis of chromosome 5 of the plant Arabidopsis thaliana.</title>
        <authorList>
            <person name="Tabata S."/>
            <person name="Kaneko T."/>
            <person name="Nakamura Y."/>
            <person name="Kotani H."/>
            <person name="Kato T."/>
            <person name="Asamizu E."/>
            <person name="Miyajima N."/>
            <person name="Sasamoto S."/>
            <person name="Kimura T."/>
            <person name="Hosouchi T."/>
            <person name="Kawashima K."/>
            <person name="Kohara M."/>
            <person name="Matsumoto M."/>
            <person name="Matsuno A."/>
            <person name="Muraki A."/>
            <person name="Nakayama S."/>
            <person name="Nakazaki N."/>
            <person name="Naruo K."/>
            <person name="Okumura S."/>
            <person name="Shinpo S."/>
            <person name="Takeuchi C."/>
            <person name="Wada T."/>
            <person name="Watanabe A."/>
            <person name="Yamada M."/>
            <person name="Yasuda M."/>
            <person name="Sato S."/>
            <person name="de la Bastide M."/>
            <person name="Huang E."/>
            <person name="Spiegel L."/>
            <person name="Gnoj L."/>
            <person name="O'Shaughnessy A."/>
            <person name="Preston R."/>
            <person name="Habermann K."/>
            <person name="Murray J."/>
            <person name="Johnson D."/>
            <person name="Rohlfing T."/>
            <person name="Nelson J."/>
            <person name="Stoneking T."/>
            <person name="Pepin K."/>
            <person name="Spieth J."/>
            <person name="Sekhon M."/>
            <person name="Armstrong J."/>
            <person name="Becker M."/>
            <person name="Belter E."/>
            <person name="Cordum H."/>
            <person name="Cordes M."/>
            <person name="Courtney L."/>
            <person name="Courtney W."/>
            <person name="Dante M."/>
            <person name="Du H."/>
            <person name="Edwards J."/>
            <person name="Fryman J."/>
            <person name="Haakensen B."/>
            <person name="Lamar E."/>
            <person name="Latreille P."/>
            <person name="Leonard S."/>
            <person name="Meyer R."/>
            <person name="Mulvaney E."/>
            <person name="Ozersky P."/>
            <person name="Riley A."/>
            <person name="Strowmatt C."/>
            <person name="Wagner-McPherson C."/>
            <person name="Wollam A."/>
            <person name="Yoakum M."/>
            <person name="Bell M."/>
            <person name="Dedhia N."/>
            <person name="Parnell L."/>
            <person name="Shah R."/>
            <person name="Rodriguez M."/>
            <person name="Hoon See L."/>
            <person name="Vil D."/>
            <person name="Baker J."/>
            <person name="Kirchoff K."/>
            <person name="Toth K."/>
            <person name="King L."/>
            <person name="Bahret A."/>
            <person name="Miller B."/>
            <person name="Marra M.A."/>
            <person name="Martienssen R."/>
            <person name="McCombie W.R."/>
            <person name="Wilson R.K."/>
            <person name="Murphy G."/>
            <person name="Bancroft I."/>
            <person name="Volckaert G."/>
            <person name="Wambutt R."/>
            <person name="Duesterhoeft A."/>
            <person name="Stiekema W."/>
            <person name="Pohl T."/>
            <person name="Entian K.-D."/>
            <person name="Terryn N."/>
            <person name="Hartley N."/>
            <person name="Bent E."/>
            <person name="Johnson S."/>
            <person name="Langham S.-A."/>
            <person name="McCullagh B."/>
            <person name="Robben J."/>
            <person name="Grymonprez B."/>
            <person name="Zimmermann W."/>
            <person name="Ramsperger U."/>
            <person name="Wedler H."/>
            <person name="Balke K."/>
            <person name="Wedler E."/>
            <person name="Peters S."/>
            <person name="van Staveren M."/>
            <person name="Dirkse W."/>
            <person name="Mooijman P."/>
            <person name="Klein Lankhorst R."/>
            <person name="Weitzenegger T."/>
            <person name="Bothe G."/>
            <person name="Rose M."/>
            <person name="Hauf J."/>
            <person name="Berneiser S."/>
            <person name="Hempel S."/>
            <person name="Feldpausch M."/>
            <person name="Lamberth S."/>
            <person name="Villarroel R."/>
            <person name="Gielen J."/>
            <person name="Ardiles W."/>
            <person name="Bents O."/>
            <person name="Lemcke K."/>
            <person name="Kolesov G."/>
            <person name="Mayer K.F.X."/>
            <person name="Rudd S."/>
            <person name="Schoof H."/>
            <person name="Schueller C."/>
            <person name="Zaccaria P."/>
            <person name="Mewes H.-W."/>
            <person name="Bevan M."/>
            <person name="Fransz P.F."/>
        </authorList>
    </citation>
    <scope>NUCLEOTIDE SEQUENCE [LARGE SCALE GENOMIC DNA]</scope>
    <source>
        <strain>cv. Columbia</strain>
    </source>
</reference>
<reference key="4">
    <citation type="journal article" date="2017" name="Plant J.">
        <title>Araport11: a complete reannotation of the Arabidopsis thaliana reference genome.</title>
        <authorList>
            <person name="Cheng C.Y."/>
            <person name="Krishnakumar V."/>
            <person name="Chan A.P."/>
            <person name="Thibaud-Nissen F."/>
            <person name="Schobel S."/>
            <person name="Town C.D."/>
        </authorList>
    </citation>
    <scope>GENOME REANNOTATION</scope>
    <source>
        <strain>cv. Columbia</strain>
    </source>
</reference>
<reference key="5">
    <citation type="journal article" date="2005" name="Plant Mol. Biol.">
        <title>AINTEGUMENTA-like (AIL) genes are expressed in young tissues and may specify meristematic or division-competent states.</title>
        <authorList>
            <person name="Nole-Wilson S."/>
            <person name="Tranby T.L."/>
            <person name="Krizek B.A."/>
        </authorList>
    </citation>
    <scope>TISSUE SPECIFICITY</scope>
</reference>
<reference key="6">
    <citation type="journal article" date="2006" name="Plant Physiol.">
        <title>Genome-wide analysis of the ERF gene family in Arabidopsis and rice.</title>
        <authorList>
            <person name="Nakano T."/>
            <person name="Suzuki K."/>
            <person name="Fujimura T."/>
            <person name="Shinshi H."/>
        </authorList>
    </citation>
    <scope>GENE FAMILY</scope>
    <scope>NOMENCLATURE</scope>
</reference>
<reference key="7">
    <citation type="journal article" date="2015" name="Development">
        <title>AIL and HDG proteins act antagonistically to control cell proliferation.</title>
        <authorList>
            <person name="Horstman A."/>
            <person name="Fukuoka H."/>
            <person name="Muino J.M."/>
            <person name="Nitsch L."/>
            <person name="Guo C."/>
            <person name="Passarinho P."/>
            <person name="Sanchez-Perez G."/>
            <person name="Immink R."/>
            <person name="Angenent G."/>
            <person name="Boutilier K."/>
        </authorList>
    </citation>
    <scope>FUNCTION</scope>
    <scope>INTERACTION WITH HDG1; HDG2; HDG3; HDG10; ANL2; ATML1; PDF2; HDG11 AND HDG12</scope>
    <scope>DEVELOPMENTAL STAGE</scope>
    <source>
        <strain>cv. Columbia</strain>
    </source>
</reference>
<dbReference type="EMBL" id="AF317907">
    <property type="protein sequence ID" value="AAM33803.1"/>
    <property type="molecule type" value="Genomic_DNA"/>
</dbReference>
<dbReference type="EMBL" id="AY585684">
    <property type="protein sequence ID" value="AAS97941.1"/>
    <property type="molecule type" value="mRNA"/>
</dbReference>
<dbReference type="EMBL" id="AL391142">
    <property type="protein sequence ID" value="CAC01738.1"/>
    <property type="molecule type" value="Genomic_DNA"/>
</dbReference>
<dbReference type="EMBL" id="CP002688">
    <property type="protein sequence ID" value="AED92425.1"/>
    <property type="molecule type" value="Genomic_DNA"/>
</dbReference>
<dbReference type="PIR" id="T51580">
    <property type="entry name" value="T51580"/>
</dbReference>
<dbReference type="RefSeq" id="NP_197245.2">
    <property type="nucleotide sequence ID" value="NM_121749.3"/>
</dbReference>
<dbReference type="SMR" id="Q6PQQ4"/>
<dbReference type="BioGRID" id="16885">
    <property type="interactions" value="3"/>
</dbReference>
<dbReference type="FunCoup" id="Q6PQQ4">
    <property type="interactions" value="7"/>
</dbReference>
<dbReference type="IntAct" id="Q6PQQ4">
    <property type="interactions" value="1"/>
</dbReference>
<dbReference type="STRING" id="3702.Q6PQQ4"/>
<dbReference type="iPTMnet" id="Q6PQQ4"/>
<dbReference type="PaxDb" id="3702-AT5G17430.1"/>
<dbReference type="ProteomicsDB" id="240644"/>
<dbReference type="EnsemblPlants" id="AT5G17430.1">
    <property type="protein sequence ID" value="AT5G17430.1"/>
    <property type="gene ID" value="AT5G17430"/>
</dbReference>
<dbReference type="GeneID" id="831609"/>
<dbReference type="Gramene" id="AT5G17430.1">
    <property type="protein sequence ID" value="AT5G17430.1"/>
    <property type="gene ID" value="AT5G17430"/>
</dbReference>
<dbReference type="KEGG" id="ath:AT5G17430"/>
<dbReference type="Araport" id="AT5G17430"/>
<dbReference type="TAIR" id="AT5G17430">
    <property type="gene designation" value="BBM"/>
</dbReference>
<dbReference type="eggNOG" id="ENOG502QSTN">
    <property type="taxonomic scope" value="Eukaryota"/>
</dbReference>
<dbReference type="HOGENOM" id="CLU_013549_3_0_1"/>
<dbReference type="InParanoid" id="Q6PQQ4"/>
<dbReference type="OMA" id="DQNHHRT"/>
<dbReference type="PhylomeDB" id="Q6PQQ4"/>
<dbReference type="PRO" id="PR:Q6PQQ4"/>
<dbReference type="Proteomes" id="UP000006548">
    <property type="component" value="Chromosome 5"/>
</dbReference>
<dbReference type="ExpressionAtlas" id="Q6PQQ4">
    <property type="expression patterns" value="baseline and differential"/>
</dbReference>
<dbReference type="GO" id="GO:0005634">
    <property type="term" value="C:nucleus"/>
    <property type="evidence" value="ECO:0007669"/>
    <property type="project" value="UniProtKB-SubCell"/>
</dbReference>
<dbReference type="GO" id="GO:0003677">
    <property type="term" value="F:DNA binding"/>
    <property type="evidence" value="ECO:0007669"/>
    <property type="project" value="UniProtKB-KW"/>
</dbReference>
<dbReference type="GO" id="GO:0003700">
    <property type="term" value="F:DNA-binding transcription factor activity"/>
    <property type="evidence" value="ECO:0000250"/>
    <property type="project" value="TAIR"/>
</dbReference>
<dbReference type="GO" id="GO:0008283">
    <property type="term" value="P:cell population proliferation"/>
    <property type="evidence" value="ECO:0000315"/>
    <property type="project" value="UniProtKB"/>
</dbReference>
<dbReference type="CDD" id="cd00018">
    <property type="entry name" value="AP2"/>
    <property type="match status" value="2"/>
</dbReference>
<dbReference type="FunFam" id="3.30.730.10:FF:000002">
    <property type="entry name" value="AP2-like ethylene-responsive transcription factor"/>
    <property type="match status" value="1"/>
</dbReference>
<dbReference type="FunFam" id="3.30.730.10:FF:000003">
    <property type="entry name" value="AP2-like ethylene-responsive transcription factor ANT"/>
    <property type="match status" value="1"/>
</dbReference>
<dbReference type="Gene3D" id="3.30.730.10">
    <property type="entry name" value="AP2/ERF domain"/>
    <property type="match status" value="2"/>
</dbReference>
<dbReference type="InterPro" id="IPR001471">
    <property type="entry name" value="AP2/ERF_dom"/>
</dbReference>
<dbReference type="InterPro" id="IPR036955">
    <property type="entry name" value="AP2/ERF_dom_sf"/>
</dbReference>
<dbReference type="InterPro" id="IPR016177">
    <property type="entry name" value="DNA-bd_dom_sf"/>
</dbReference>
<dbReference type="PANTHER" id="PTHR32467">
    <property type="entry name" value="AP2-LIKE ETHYLENE-RESPONSIVE TRANSCRIPTION FACTOR"/>
    <property type="match status" value="1"/>
</dbReference>
<dbReference type="PANTHER" id="PTHR32467:SF72">
    <property type="entry name" value="AP2-LIKE ETHYLENE-RESPONSIVE TRANSCRIPTION FACTOR BBM"/>
    <property type="match status" value="1"/>
</dbReference>
<dbReference type="Pfam" id="PF00847">
    <property type="entry name" value="AP2"/>
    <property type="match status" value="2"/>
</dbReference>
<dbReference type="PRINTS" id="PR00367">
    <property type="entry name" value="ETHRSPELEMNT"/>
</dbReference>
<dbReference type="SMART" id="SM00380">
    <property type="entry name" value="AP2"/>
    <property type="match status" value="2"/>
</dbReference>
<dbReference type="SUPFAM" id="SSF54171">
    <property type="entry name" value="DNA-binding domain"/>
    <property type="match status" value="2"/>
</dbReference>
<dbReference type="PROSITE" id="PS51032">
    <property type="entry name" value="AP2_ERF"/>
    <property type="match status" value="2"/>
</dbReference>
<evidence type="ECO:0000255" key="1">
    <source>
        <dbReference type="PROSITE-ProRule" id="PRU00366"/>
    </source>
</evidence>
<evidence type="ECO:0000256" key="2">
    <source>
        <dbReference type="SAM" id="MobiDB-lite"/>
    </source>
</evidence>
<evidence type="ECO:0000269" key="3">
    <source>
    </source>
</evidence>
<evidence type="ECO:0000269" key="4">
    <source>
    </source>
</evidence>
<evidence type="ECO:0000269" key="5">
    <source>
    </source>
</evidence>
<evidence type="ECO:0000303" key="6">
    <source>
    </source>
</evidence>
<evidence type="ECO:0000303" key="7">
    <source>
    </source>
</evidence>
<evidence type="ECO:0000305" key="8"/>
<evidence type="ECO:0000305" key="9">
    <source>
    </source>
</evidence>
<evidence type="ECO:0000312" key="10">
    <source>
        <dbReference type="Araport" id="AT5G17430"/>
    </source>
</evidence>
<evidence type="ECO:0000312" key="11">
    <source>
        <dbReference type="EMBL" id="CAC01738.1"/>
    </source>
</evidence>
<organism>
    <name type="scientific">Arabidopsis thaliana</name>
    <name type="common">Mouse-ear cress</name>
    <dbReference type="NCBI Taxonomy" id="3702"/>
    <lineage>
        <taxon>Eukaryota</taxon>
        <taxon>Viridiplantae</taxon>
        <taxon>Streptophyta</taxon>
        <taxon>Embryophyta</taxon>
        <taxon>Tracheophyta</taxon>
        <taxon>Spermatophyta</taxon>
        <taxon>Magnoliopsida</taxon>
        <taxon>eudicotyledons</taxon>
        <taxon>Gunneridae</taxon>
        <taxon>Pentapetalae</taxon>
        <taxon>rosids</taxon>
        <taxon>malvids</taxon>
        <taxon>Brassicales</taxon>
        <taxon>Brassicaceae</taxon>
        <taxon>Camelineae</taxon>
        <taxon>Arabidopsis</taxon>
    </lineage>
</organism>
<proteinExistence type="evidence at protein level"/>
<keyword id="KW-0217">Developmental protein</keyword>
<keyword id="KW-0238">DNA-binding</keyword>
<keyword id="KW-0539">Nucleus</keyword>
<keyword id="KW-1185">Reference proteome</keyword>
<keyword id="KW-0677">Repeat</keyword>
<keyword id="KW-0804">Transcription</keyword>
<keyword id="KW-0805">Transcription regulation</keyword>